<evidence type="ECO:0000255" key="1">
    <source>
        <dbReference type="HAMAP-Rule" id="MF_01006"/>
    </source>
</evidence>
<comment type="function">
    <text evidence="1">Catalyzes the dephosphorylation of undecaprenyl diphosphate (UPP). Confers resistance to bacitracin.</text>
</comment>
<comment type="catalytic activity">
    <reaction evidence="1">
        <text>di-trans,octa-cis-undecaprenyl diphosphate + H2O = di-trans,octa-cis-undecaprenyl phosphate + phosphate + H(+)</text>
        <dbReference type="Rhea" id="RHEA:28094"/>
        <dbReference type="ChEBI" id="CHEBI:15377"/>
        <dbReference type="ChEBI" id="CHEBI:15378"/>
        <dbReference type="ChEBI" id="CHEBI:43474"/>
        <dbReference type="ChEBI" id="CHEBI:58405"/>
        <dbReference type="ChEBI" id="CHEBI:60392"/>
        <dbReference type="EC" id="3.6.1.27"/>
    </reaction>
</comment>
<comment type="subcellular location">
    <subcellularLocation>
        <location evidence="1">Cell inner membrane</location>
        <topology evidence="1">Multi-pass membrane protein</topology>
    </subcellularLocation>
</comment>
<comment type="miscellaneous">
    <text>Bacitracin is thought to be involved in the inhibition of peptidoglycan synthesis by sequestering undecaprenyl diphosphate, thereby reducing the pool of lipid carrier available.</text>
</comment>
<comment type="similarity">
    <text evidence="1">Belongs to the UppP family.</text>
</comment>
<organism>
    <name type="scientific">Sphingopyxis alaskensis (strain DSM 13593 / LMG 18877 / RB2256)</name>
    <name type="common">Sphingomonas alaskensis</name>
    <dbReference type="NCBI Taxonomy" id="317655"/>
    <lineage>
        <taxon>Bacteria</taxon>
        <taxon>Pseudomonadati</taxon>
        <taxon>Pseudomonadota</taxon>
        <taxon>Alphaproteobacteria</taxon>
        <taxon>Sphingomonadales</taxon>
        <taxon>Sphingomonadaceae</taxon>
        <taxon>Sphingopyxis</taxon>
    </lineage>
</organism>
<protein>
    <recommendedName>
        <fullName evidence="1">Undecaprenyl-diphosphatase</fullName>
        <ecNumber evidence="1">3.6.1.27</ecNumber>
    </recommendedName>
    <alternativeName>
        <fullName evidence="1">Bacitracin resistance protein</fullName>
    </alternativeName>
    <alternativeName>
        <fullName evidence="1">Undecaprenyl pyrophosphate phosphatase</fullName>
    </alternativeName>
</protein>
<name>UPPP_SPHAL</name>
<gene>
    <name evidence="1" type="primary">uppP</name>
    <name type="ordered locus">Sala_2137</name>
</gene>
<keyword id="KW-0046">Antibiotic resistance</keyword>
<keyword id="KW-0997">Cell inner membrane</keyword>
<keyword id="KW-1003">Cell membrane</keyword>
<keyword id="KW-0133">Cell shape</keyword>
<keyword id="KW-0961">Cell wall biogenesis/degradation</keyword>
<keyword id="KW-0378">Hydrolase</keyword>
<keyword id="KW-0472">Membrane</keyword>
<keyword id="KW-0573">Peptidoglycan synthesis</keyword>
<keyword id="KW-1185">Reference proteome</keyword>
<keyword id="KW-0812">Transmembrane</keyword>
<keyword id="KW-1133">Transmembrane helix</keyword>
<feature type="chain" id="PRO_0000290770" description="Undecaprenyl-diphosphatase">
    <location>
        <begin position="1"/>
        <end position="266"/>
    </location>
</feature>
<feature type="transmembrane region" description="Helical" evidence="1">
    <location>
        <begin position="4"/>
        <end position="24"/>
    </location>
</feature>
<feature type="transmembrane region" description="Helical" evidence="1">
    <location>
        <begin position="41"/>
        <end position="61"/>
    </location>
</feature>
<feature type="transmembrane region" description="Helical" evidence="1">
    <location>
        <begin position="79"/>
        <end position="99"/>
    </location>
</feature>
<feature type="transmembrane region" description="Helical" evidence="1">
    <location>
        <begin position="108"/>
        <end position="128"/>
    </location>
</feature>
<feature type="transmembrane region" description="Helical" evidence="1">
    <location>
        <begin position="143"/>
        <end position="163"/>
    </location>
</feature>
<feature type="transmembrane region" description="Helical" evidence="1">
    <location>
        <begin position="184"/>
        <end position="204"/>
    </location>
</feature>
<feature type="transmembrane region" description="Helical" evidence="1">
    <location>
        <begin position="220"/>
        <end position="240"/>
    </location>
</feature>
<feature type="transmembrane region" description="Helical" evidence="1">
    <location>
        <begin position="243"/>
        <end position="263"/>
    </location>
</feature>
<dbReference type="EC" id="3.6.1.27" evidence="1"/>
<dbReference type="EMBL" id="CP000356">
    <property type="protein sequence ID" value="ABF53846.1"/>
    <property type="molecule type" value="Genomic_DNA"/>
</dbReference>
<dbReference type="RefSeq" id="WP_011542422.1">
    <property type="nucleotide sequence ID" value="NC_008048.1"/>
</dbReference>
<dbReference type="SMR" id="Q1GR76"/>
<dbReference type="STRING" id="317655.Sala_2137"/>
<dbReference type="KEGG" id="sal:Sala_2137"/>
<dbReference type="eggNOG" id="COG1968">
    <property type="taxonomic scope" value="Bacteria"/>
</dbReference>
<dbReference type="HOGENOM" id="CLU_060296_2_0_5"/>
<dbReference type="OrthoDB" id="9808289at2"/>
<dbReference type="Proteomes" id="UP000006578">
    <property type="component" value="Chromosome"/>
</dbReference>
<dbReference type="GO" id="GO:0005886">
    <property type="term" value="C:plasma membrane"/>
    <property type="evidence" value="ECO:0007669"/>
    <property type="project" value="UniProtKB-SubCell"/>
</dbReference>
<dbReference type="GO" id="GO:0050380">
    <property type="term" value="F:undecaprenyl-diphosphatase activity"/>
    <property type="evidence" value="ECO:0007669"/>
    <property type="project" value="UniProtKB-UniRule"/>
</dbReference>
<dbReference type="GO" id="GO:0071555">
    <property type="term" value="P:cell wall organization"/>
    <property type="evidence" value="ECO:0007669"/>
    <property type="project" value="UniProtKB-KW"/>
</dbReference>
<dbReference type="GO" id="GO:0009252">
    <property type="term" value="P:peptidoglycan biosynthetic process"/>
    <property type="evidence" value="ECO:0007669"/>
    <property type="project" value="UniProtKB-KW"/>
</dbReference>
<dbReference type="GO" id="GO:0008360">
    <property type="term" value="P:regulation of cell shape"/>
    <property type="evidence" value="ECO:0007669"/>
    <property type="project" value="UniProtKB-KW"/>
</dbReference>
<dbReference type="GO" id="GO:0046677">
    <property type="term" value="P:response to antibiotic"/>
    <property type="evidence" value="ECO:0007669"/>
    <property type="project" value="UniProtKB-UniRule"/>
</dbReference>
<dbReference type="HAMAP" id="MF_01006">
    <property type="entry name" value="Undec_diphosphatase"/>
    <property type="match status" value="1"/>
</dbReference>
<dbReference type="InterPro" id="IPR003824">
    <property type="entry name" value="UppP"/>
</dbReference>
<dbReference type="NCBIfam" id="NF001389">
    <property type="entry name" value="PRK00281.1-2"/>
    <property type="match status" value="1"/>
</dbReference>
<dbReference type="NCBIfam" id="NF001390">
    <property type="entry name" value="PRK00281.1-4"/>
    <property type="match status" value="1"/>
</dbReference>
<dbReference type="NCBIfam" id="TIGR00753">
    <property type="entry name" value="undec_PP_bacA"/>
    <property type="match status" value="1"/>
</dbReference>
<dbReference type="PANTHER" id="PTHR30622">
    <property type="entry name" value="UNDECAPRENYL-DIPHOSPHATASE"/>
    <property type="match status" value="1"/>
</dbReference>
<dbReference type="PANTHER" id="PTHR30622:SF3">
    <property type="entry name" value="UNDECAPRENYL-DIPHOSPHATASE"/>
    <property type="match status" value="1"/>
</dbReference>
<dbReference type="Pfam" id="PF02673">
    <property type="entry name" value="BacA"/>
    <property type="match status" value="1"/>
</dbReference>
<accession>Q1GR76</accession>
<sequence length="266" mass="28014">MHDLATIILLGIIEGLTEFLPVSSTGHLILASEMLGFTGEGSAAFKIAIQLGAILAVLVAYRARFWGVGMGLLRADPAAVAFTRNILIGFLPAMLVGAVAYEGVRALLESPATVAVALLVGGIAILAIERMVKVVKVESVEAMPLRTAIAIGAVQCIAMIPGVSRSGATIMGALLMGVERRTAAEFSFFLAVPTMMGATAYSLWKDRAILTFDDMNAIAIGLFVAFLVALVVVKAFVAIVGRFGFAPFAWYRIIVGGGALLWLAWK</sequence>
<proteinExistence type="inferred from homology"/>
<reference key="1">
    <citation type="journal article" date="2009" name="Proc. Natl. Acad. Sci. U.S.A.">
        <title>The genomic basis of trophic strategy in marine bacteria.</title>
        <authorList>
            <person name="Lauro F.M."/>
            <person name="McDougald D."/>
            <person name="Thomas T."/>
            <person name="Williams T.J."/>
            <person name="Egan S."/>
            <person name="Rice S."/>
            <person name="DeMaere M.Z."/>
            <person name="Ting L."/>
            <person name="Ertan H."/>
            <person name="Johnson J."/>
            <person name="Ferriera S."/>
            <person name="Lapidus A."/>
            <person name="Anderson I."/>
            <person name="Kyrpides N."/>
            <person name="Munk A.C."/>
            <person name="Detter C."/>
            <person name="Han C.S."/>
            <person name="Brown M.V."/>
            <person name="Robb F.T."/>
            <person name="Kjelleberg S."/>
            <person name="Cavicchioli R."/>
        </authorList>
    </citation>
    <scope>NUCLEOTIDE SEQUENCE [LARGE SCALE GENOMIC DNA]</scope>
    <source>
        <strain>DSM 13593 / LMG 18877 / RB2256</strain>
    </source>
</reference>